<comment type="function">
    <text>PPIases accelerate the folding of proteins. It catalyzes the cis-trans isomerization of proline imidic peptide bonds in oligopeptides.</text>
</comment>
<comment type="catalytic activity">
    <reaction>
        <text>[protein]-peptidylproline (omega=180) = [protein]-peptidylproline (omega=0)</text>
        <dbReference type="Rhea" id="RHEA:16237"/>
        <dbReference type="Rhea" id="RHEA-COMP:10747"/>
        <dbReference type="Rhea" id="RHEA-COMP:10748"/>
        <dbReference type="ChEBI" id="CHEBI:83833"/>
        <dbReference type="ChEBI" id="CHEBI:83834"/>
        <dbReference type="EC" id="5.2.1.8"/>
    </reaction>
</comment>
<comment type="activity regulation">
    <text>Binds cyclosporin A (CsA). CsA mediates some of its effects via an inhibitory action on PPIase.</text>
</comment>
<comment type="subcellular location">
    <subcellularLocation>
        <location evidence="1">Cytoplasm</location>
    </subcellularLocation>
</comment>
<comment type="similarity">
    <text evidence="5">Belongs to the cyclophilin-type PPIase family. PPIase E subfamily.</text>
</comment>
<comment type="sequence caution" evidence="5">
    <conflict type="erroneous initiation">
        <sequence resource="EMBL-CDS" id="AAC47317"/>
    </conflict>
</comment>
<dbReference type="EC" id="5.2.1.8"/>
<dbReference type="EMBL" id="U30265">
    <property type="protein sequence ID" value="AAC47543.1"/>
    <property type="molecule type" value="mRNA"/>
</dbReference>
<dbReference type="EMBL" id="U50388">
    <property type="protein sequence ID" value="AAC47317.1"/>
    <property type="status" value="ALT_INIT"/>
    <property type="molecule type" value="mRNA"/>
</dbReference>
<dbReference type="PDB" id="2CK1">
    <property type="method" value="X-ray"/>
    <property type="resolution" value="1.80 A"/>
    <property type="chains" value="A=102-273"/>
</dbReference>
<dbReference type="PDB" id="2CMT">
    <property type="method" value="X-ray"/>
    <property type="resolution" value="1.50 A"/>
    <property type="chains" value="A=102-273"/>
</dbReference>
<dbReference type="PDBsum" id="2CK1"/>
<dbReference type="PDBsum" id="2CMT"/>
<dbReference type="SMR" id="Q26548"/>
<dbReference type="FunCoup" id="Q26548">
    <property type="interactions" value="1574"/>
</dbReference>
<dbReference type="STRING" id="6183.Q26548"/>
<dbReference type="EnsemblMetazoa" id="Smp_094810.1">
    <property type="protein sequence ID" value="Smp_094810.1"/>
    <property type="gene ID" value="Smp_094810"/>
</dbReference>
<dbReference type="WBParaSite" id="Smp_094810.1">
    <property type="protein sequence ID" value="Smp_094810.1"/>
    <property type="gene ID" value="Smp_094810"/>
</dbReference>
<dbReference type="eggNOG" id="KOG0111">
    <property type="taxonomic scope" value="Eukaryota"/>
</dbReference>
<dbReference type="HOGENOM" id="CLU_012062_27_0_1"/>
<dbReference type="InParanoid" id="Q26548"/>
<dbReference type="BRENDA" id="5.2.1.8">
    <property type="organism ID" value="5608"/>
</dbReference>
<dbReference type="EvolutionaryTrace" id="Q26548"/>
<dbReference type="Proteomes" id="UP000008854">
    <property type="component" value="Unassembled WGS sequence"/>
</dbReference>
<dbReference type="ExpressionAtlas" id="Q26548">
    <property type="expression patterns" value="baseline"/>
</dbReference>
<dbReference type="GO" id="GO:0005739">
    <property type="term" value="C:mitochondrion"/>
    <property type="evidence" value="ECO:0007669"/>
    <property type="project" value="TreeGrafter"/>
</dbReference>
<dbReference type="GO" id="GO:0016018">
    <property type="term" value="F:cyclosporin A binding"/>
    <property type="evidence" value="ECO:0007669"/>
    <property type="project" value="TreeGrafter"/>
</dbReference>
<dbReference type="GO" id="GO:0003755">
    <property type="term" value="F:peptidyl-prolyl cis-trans isomerase activity"/>
    <property type="evidence" value="ECO:0007669"/>
    <property type="project" value="UniProtKB-KW"/>
</dbReference>
<dbReference type="GO" id="GO:0003723">
    <property type="term" value="F:RNA binding"/>
    <property type="evidence" value="ECO:0007669"/>
    <property type="project" value="UniProtKB-KW"/>
</dbReference>
<dbReference type="GO" id="GO:0006457">
    <property type="term" value="P:protein folding"/>
    <property type="evidence" value="ECO:0007669"/>
    <property type="project" value="InterPro"/>
</dbReference>
<dbReference type="CDD" id="cd01926">
    <property type="entry name" value="cyclophilin_ABH_like"/>
    <property type="match status" value="1"/>
</dbReference>
<dbReference type="FunFam" id="2.40.100.10:FF:000013">
    <property type="entry name" value="Peptidyl-prolyl cis-trans isomerase"/>
    <property type="match status" value="1"/>
</dbReference>
<dbReference type="Gene3D" id="3.30.70.330">
    <property type="match status" value="1"/>
</dbReference>
<dbReference type="Gene3D" id="2.40.100.10">
    <property type="entry name" value="Cyclophilin-like"/>
    <property type="match status" value="1"/>
</dbReference>
<dbReference type="InterPro" id="IPR029000">
    <property type="entry name" value="Cyclophilin-like_dom_sf"/>
</dbReference>
<dbReference type="InterPro" id="IPR020892">
    <property type="entry name" value="Cyclophilin-type_PPIase_CS"/>
</dbReference>
<dbReference type="InterPro" id="IPR002130">
    <property type="entry name" value="Cyclophilin-type_PPIase_dom"/>
</dbReference>
<dbReference type="InterPro" id="IPR012677">
    <property type="entry name" value="Nucleotide-bd_a/b_plait_sf"/>
</dbReference>
<dbReference type="InterPro" id="IPR016304">
    <property type="entry name" value="PPIE"/>
</dbReference>
<dbReference type="InterPro" id="IPR035979">
    <property type="entry name" value="RBD_domain_sf"/>
</dbReference>
<dbReference type="InterPro" id="IPR000504">
    <property type="entry name" value="RRM_dom"/>
</dbReference>
<dbReference type="PANTHER" id="PTHR11071">
    <property type="entry name" value="PEPTIDYL-PROLYL CIS-TRANS ISOMERASE"/>
    <property type="match status" value="1"/>
</dbReference>
<dbReference type="PANTHER" id="PTHR11071:SF561">
    <property type="entry name" value="PEPTIDYL-PROLYL CIS-TRANS ISOMERASE D-RELATED"/>
    <property type="match status" value="1"/>
</dbReference>
<dbReference type="Pfam" id="PF00160">
    <property type="entry name" value="Pro_isomerase"/>
    <property type="match status" value="1"/>
</dbReference>
<dbReference type="Pfam" id="PF00076">
    <property type="entry name" value="RRM_1"/>
    <property type="match status" value="1"/>
</dbReference>
<dbReference type="PIRSF" id="PIRSF001475">
    <property type="entry name" value="PPI_cyclophilin_E"/>
    <property type="match status" value="1"/>
</dbReference>
<dbReference type="PRINTS" id="PR00153">
    <property type="entry name" value="CSAPPISMRASE"/>
</dbReference>
<dbReference type="SUPFAM" id="SSF50891">
    <property type="entry name" value="Cyclophilin-like"/>
    <property type="match status" value="1"/>
</dbReference>
<dbReference type="SUPFAM" id="SSF54928">
    <property type="entry name" value="RNA-binding domain, RBD"/>
    <property type="match status" value="1"/>
</dbReference>
<dbReference type="PROSITE" id="PS00170">
    <property type="entry name" value="CSA_PPIASE_1"/>
    <property type="match status" value="1"/>
</dbReference>
<dbReference type="PROSITE" id="PS50072">
    <property type="entry name" value="CSA_PPIASE_2"/>
    <property type="match status" value="1"/>
</dbReference>
<dbReference type="PROSITE" id="PS50102">
    <property type="entry name" value="RRM"/>
    <property type="match status" value="1"/>
</dbReference>
<sequence>MPMDYQTEKHRGFAFVEFEEVEDAMSAIDNMNESEIFGRTIRVNVARPVRIREGWSRPVWSDENWLKKYGSAPLEGRKLDEPDIVNPSDTSENVEDLSDEEMRTKKQKRNLPRVFFDIRIGNGDAGRIVMELRSDIVPRTAENFRALCTGERGFGYHNCCFHRVIPQFMCQGGDFVKGDGTGGKSIYGRKFDDENFQLRHEGFGVLSMANSGPNTNGSQFFICTTKCDWLDGKHVVFGRVVDGQNVVKKMESVGSKSGKVKEPVIISRCGELI</sequence>
<feature type="chain" id="PRO_0000064161" description="Peptidyl-prolyl cis-trans isomerase E">
    <location>
        <begin position="1"/>
        <end position="273"/>
    </location>
</feature>
<feature type="domain" description="RRM" evidence="3">
    <location>
        <begin position="1"/>
        <end position="48"/>
    </location>
</feature>
<feature type="domain" description="PPIase cyclophilin-type" evidence="2">
    <location>
        <begin position="115"/>
        <end position="271"/>
    </location>
</feature>
<feature type="region of interest" description="Disordered" evidence="4">
    <location>
        <begin position="77"/>
        <end position="103"/>
    </location>
</feature>
<feature type="sequence conflict" description="In Ref. 2; AAC47317." evidence="5" ref="2">
    <original>F</original>
    <variation>I</variation>
    <location>
        <position position="196"/>
    </location>
</feature>
<feature type="strand" evidence="6">
    <location>
        <begin position="113"/>
        <end position="120"/>
    </location>
</feature>
<feature type="strand" evidence="6">
    <location>
        <begin position="123"/>
        <end position="132"/>
    </location>
</feature>
<feature type="turn" evidence="6">
    <location>
        <begin position="134"/>
        <end position="136"/>
    </location>
</feature>
<feature type="helix" evidence="6">
    <location>
        <begin position="138"/>
        <end position="149"/>
    </location>
</feature>
<feature type="turn" evidence="6">
    <location>
        <begin position="150"/>
        <end position="152"/>
    </location>
</feature>
<feature type="strand" evidence="6">
    <location>
        <begin position="160"/>
        <end position="165"/>
    </location>
</feature>
<feature type="turn" evidence="6">
    <location>
        <begin position="166"/>
        <end position="168"/>
    </location>
</feature>
<feature type="strand" evidence="6">
    <location>
        <begin position="169"/>
        <end position="172"/>
    </location>
</feature>
<feature type="turn" evidence="6">
    <location>
        <begin position="175"/>
        <end position="177"/>
    </location>
</feature>
<feature type="strand" evidence="6">
    <location>
        <begin position="178"/>
        <end position="181"/>
    </location>
</feature>
<feature type="strand" evidence="6">
    <location>
        <begin position="205"/>
        <end position="208"/>
    </location>
</feature>
<feature type="strand" evidence="6">
    <location>
        <begin position="220"/>
        <end position="225"/>
    </location>
</feature>
<feature type="helix" evidence="6">
    <location>
        <begin position="228"/>
        <end position="230"/>
    </location>
</feature>
<feature type="turn" evidence="6">
    <location>
        <begin position="231"/>
        <end position="233"/>
    </location>
</feature>
<feature type="strand" evidence="6">
    <location>
        <begin position="236"/>
        <end position="242"/>
    </location>
</feature>
<feature type="helix" evidence="6">
    <location>
        <begin position="244"/>
        <end position="249"/>
    </location>
</feature>
<feature type="helix" evidence="6">
    <location>
        <begin position="250"/>
        <end position="253"/>
    </location>
</feature>
<feature type="strand" evidence="6">
    <location>
        <begin position="264"/>
        <end position="272"/>
    </location>
</feature>
<protein>
    <recommendedName>
        <fullName>Peptidyl-prolyl cis-trans isomerase E</fullName>
        <shortName>PPIase E</shortName>
        <ecNumber>5.2.1.8</ecNumber>
    </recommendedName>
    <alternativeName>
        <fullName>Cyclophilin E</fullName>
    </alternativeName>
    <alternativeName>
        <fullName>Rotamase E</fullName>
    </alternativeName>
</protein>
<reference key="1">
    <citation type="journal article" date="1995" name="J. Biol. Chem.">
        <title>RNA trans-splicing in flatworms. Analysis of trans-spliced mRNAs and genes in the human parasite, Schistosoma mansoni.</title>
        <authorList>
            <person name="Davis R.E."/>
            <person name="Hardwick C."/>
            <person name="Tavernier P."/>
            <person name="Hodgson S."/>
            <person name="Singh H."/>
        </authorList>
    </citation>
    <scope>NUCLEOTIDE SEQUENCE [MRNA]</scope>
</reference>
<reference key="2">
    <citation type="journal article" date="1996" name="Mol. Biochem. Parasitol.">
        <title>Sequence conservation of schistosome cyclophilins.</title>
        <authorList>
            <person name="Klinkert M.-Q."/>
            <person name="Bugli F."/>
            <person name="Cruz J."/>
            <person name="Engels B."/>
            <person name="Cioli D."/>
        </authorList>
    </citation>
    <scope>NUCLEOTIDE SEQUENCE [MRNA] OF 57-273</scope>
</reference>
<keyword id="KW-0002">3D-structure</keyword>
<keyword id="KW-0963">Cytoplasm</keyword>
<keyword id="KW-0413">Isomerase</keyword>
<keyword id="KW-1185">Reference proteome</keyword>
<keyword id="KW-0694">RNA-binding</keyword>
<keyword id="KW-0697">Rotamase</keyword>
<organism>
    <name type="scientific">Schistosoma mansoni</name>
    <name type="common">Blood fluke</name>
    <dbReference type="NCBI Taxonomy" id="6183"/>
    <lineage>
        <taxon>Eukaryota</taxon>
        <taxon>Metazoa</taxon>
        <taxon>Spiralia</taxon>
        <taxon>Lophotrochozoa</taxon>
        <taxon>Platyhelminthes</taxon>
        <taxon>Trematoda</taxon>
        <taxon>Digenea</taxon>
        <taxon>Strigeidida</taxon>
        <taxon>Schistosomatoidea</taxon>
        <taxon>Schistosomatidae</taxon>
        <taxon>Schistosoma</taxon>
    </lineage>
</organism>
<proteinExistence type="evidence at protein level"/>
<accession>Q26548</accession>
<accession>Q26558</accession>
<name>PPIE_SCHMA</name>
<evidence type="ECO:0000250" key="1"/>
<evidence type="ECO:0000255" key="2">
    <source>
        <dbReference type="PROSITE-ProRule" id="PRU00156"/>
    </source>
</evidence>
<evidence type="ECO:0000255" key="3">
    <source>
        <dbReference type="PROSITE-ProRule" id="PRU00176"/>
    </source>
</evidence>
<evidence type="ECO:0000256" key="4">
    <source>
        <dbReference type="SAM" id="MobiDB-lite"/>
    </source>
</evidence>
<evidence type="ECO:0000305" key="5"/>
<evidence type="ECO:0007829" key="6">
    <source>
        <dbReference type="PDB" id="2CMT"/>
    </source>
</evidence>